<gene>
    <name evidence="1" type="primary">rpsG</name>
    <name type="ordered locus">NTHI0746</name>
</gene>
<comment type="function">
    <text evidence="1">One of the primary rRNA binding proteins, it binds directly to 16S rRNA where it nucleates assembly of the head domain of the 30S subunit. Is located at the subunit interface close to the decoding center, probably blocks exit of the E-site tRNA.</text>
</comment>
<comment type="subunit">
    <text evidence="1">Part of the 30S ribosomal subunit. Contacts proteins S9 and S11.</text>
</comment>
<comment type="similarity">
    <text evidence="1">Belongs to the universal ribosomal protein uS7 family.</text>
</comment>
<dbReference type="EMBL" id="CP000057">
    <property type="protein sequence ID" value="AAX87660.1"/>
    <property type="molecule type" value="Genomic_DNA"/>
</dbReference>
<dbReference type="RefSeq" id="WP_005626581.1">
    <property type="nucleotide sequence ID" value="NC_007146.2"/>
</dbReference>
<dbReference type="SMR" id="Q4QMT7"/>
<dbReference type="GeneID" id="56957177"/>
<dbReference type="KEGG" id="hit:NTHI0746"/>
<dbReference type="HOGENOM" id="CLU_072226_1_1_6"/>
<dbReference type="Proteomes" id="UP000002525">
    <property type="component" value="Chromosome"/>
</dbReference>
<dbReference type="GO" id="GO:0015935">
    <property type="term" value="C:small ribosomal subunit"/>
    <property type="evidence" value="ECO:0007669"/>
    <property type="project" value="InterPro"/>
</dbReference>
<dbReference type="GO" id="GO:0019843">
    <property type="term" value="F:rRNA binding"/>
    <property type="evidence" value="ECO:0007669"/>
    <property type="project" value="UniProtKB-UniRule"/>
</dbReference>
<dbReference type="GO" id="GO:0003735">
    <property type="term" value="F:structural constituent of ribosome"/>
    <property type="evidence" value="ECO:0007669"/>
    <property type="project" value="InterPro"/>
</dbReference>
<dbReference type="GO" id="GO:0000049">
    <property type="term" value="F:tRNA binding"/>
    <property type="evidence" value="ECO:0007669"/>
    <property type="project" value="UniProtKB-UniRule"/>
</dbReference>
<dbReference type="GO" id="GO:0006412">
    <property type="term" value="P:translation"/>
    <property type="evidence" value="ECO:0007669"/>
    <property type="project" value="UniProtKB-UniRule"/>
</dbReference>
<dbReference type="CDD" id="cd14869">
    <property type="entry name" value="uS7_Bacteria"/>
    <property type="match status" value="1"/>
</dbReference>
<dbReference type="FunFam" id="1.10.455.10:FF:000001">
    <property type="entry name" value="30S ribosomal protein S7"/>
    <property type="match status" value="1"/>
</dbReference>
<dbReference type="Gene3D" id="1.10.455.10">
    <property type="entry name" value="Ribosomal protein S7 domain"/>
    <property type="match status" value="1"/>
</dbReference>
<dbReference type="HAMAP" id="MF_00480_B">
    <property type="entry name" value="Ribosomal_uS7_B"/>
    <property type="match status" value="1"/>
</dbReference>
<dbReference type="InterPro" id="IPR000235">
    <property type="entry name" value="Ribosomal_uS7"/>
</dbReference>
<dbReference type="InterPro" id="IPR005717">
    <property type="entry name" value="Ribosomal_uS7_bac/org-type"/>
</dbReference>
<dbReference type="InterPro" id="IPR020606">
    <property type="entry name" value="Ribosomal_uS7_CS"/>
</dbReference>
<dbReference type="InterPro" id="IPR023798">
    <property type="entry name" value="Ribosomal_uS7_dom"/>
</dbReference>
<dbReference type="InterPro" id="IPR036823">
    <property type="entry name" value="Ribosomal_uS7_dom_sf"/>
</dbReference>
<dbReference type="NCBIfam" id="TIGR01029">
    <property type="entry name" value="rpsG_bact"/>
    <property type="match status" value="1"/>
</dbReference>
<dbReference type="PANTHER" id="PTHR11205">
    <property type="entry name" value="RIBOSOMAL PROTEIN S7"/>
    <property type="match status" value="1"/>
</dbReference>
<dbReference type="Pfam" id="PF00177">
    <property type="entry name" value="Ribosomal_S7"/>
    <property type="match status" value="1"/>
</dbReference>
<dbReference type="PIRSF" id="PIRSF002122">
    <property type="entry name" value="RPS7p_RPS7a_RPS5e_RPS7o"/>
    <property type="match status" value="1"/>
</dbReference>
<dbReference type="SUPFAM" id="SSF47973">
    <property type="entry name" value="Ribosomal protein S7"/>
    <property type="match status" value="1"/>
</dbReference>
<dbReference type="PROSITE" id="PS00052">
    <property type="entry name" value="RIBOSOMAL_S7"/>
    <property type="match status" value="1"/>
</dbReference>
<protein>
    <recommendedName>
        <fullName evidence="1">Small ribosomal subunit protein uS7</fullName>
    </recommendedName>
    <alternativeName>
        <fullName evidence="2">30S ribosomal protein S7</fullName>
    </alternativeName>
</protein>
<feature type="chain" id="PRO_0000226504" description="Small ribosomal subunit protein uS7">
    <location>
        <begin position="1"/>
        <end position="156"/>
    </location>
</feature>
<organism>
    <name type="scientific">Haemophilus influenzae (strain 86-028NP)</name>
    <dbReference type="NCBI Taxonomy" id="281310"/>
    <lineage>
        <taxon>Bacteria</taxon>
        <taxon>Pseudomonadati</taxon>
        <taxon>Pseudomonadota</taxon>
        <taxon>Gammaproteobacteria</taxon>
        <taxon>Pasteurellales</taxon>
        <taxon>Pasteurellaceae</taxon>
        <taxon>Haemophilus</taxon>
    </lineage>
</organism>
<reference key="1">
    <citation type="journal article" date="2005" name="J. Bacteriol.">
        <title>Genomic sequence of an otitis media isolate of nontypeable Haemophilus influenzae: comparative study with H. influenzae serotype d, strain KW20.</title>
        <authorList>
            <person name="Harrison A."/>
            <person name="Dyer D.W."/>
            <person name="Gillaspy A."/>
            <person name="Ray W.C."/>
            <person name="Mungur R."/>
            <person name="Carson M.B."/>
            <person name="Zhong H."/>
            <person name="Gipson J."/>
            <person name="Gipson M."/>
            <person name="Johnson L.S."/>
            <person name="Lewis L."/>
            <person name="Bakaletz L.O."/>
            <person name="Munson R.S. Jr."/>
        </authorList>
    </citation>
    <scope>NUCLEOTIDE SEQUENCE [LARGE SCALE GENOMIC DNA]</scope>
    <source>
        <strain>86-028NP</strain>
    </source>
</reference>
<keyword id="KW-0687">Ribonucleoprotein</keyword>
<keyword id="KW-0689">Ribosomal protein</keyword>
<keyword id="KW-0694">RNA-binding</keyword>
<keyword id="KW-0699">rRNA-binding</keyword>
<keyword id="KW-0820">tRNA-binding</keyword>
<proteinExistence type="inferred from homology"/>
<evidence type="ECO:0000255" key="1">
    <source>
        <dbReference type="HAMAP-Rule" id="MF_00480"/>
    </source>
</evidence>
<evidence type="ECO:0000305" key="2"/>
<accession>Q4QMT7</accession>
<sequence>MPRRRSVEARKILPDPKFGSELLAKFINVIMVDGKKSVAESIVYGALETLAQRTGKEPLEAFEVALENVRPTVEVKSRRVGGSTYQVPVEVRPVRRNALGMRWIVEAARKRGDKSMALRLANELSDASDNKGAAVKKREDVHRMAEANKAFAHYRW</sequence>
<name>RS7_HAEI8</name>